<name>CND1_YEAST</name>
<organism>
    <name type="scientific">Saccharomyces cerevisiae (strain ATCC 204508 / S288c)</name>
    <name type="common">Baker's yeast</name>
    <dbReference type="NCBI Taxonomy" id="559292"/>
    <lineage>
        <taxon>Eukaryota</taxon>
        <taxon>Fungi</taxon>
        <taxon>Dikarya</taxon>
        <taxon>Ascomycota</taxon>
        <taxon>Saccharomycotina</taxon>
        <taxon>Saccharomycetes</taxon>
        <taxon>Saccharomycetales</taxon>
        <taxon>Saccharomycetaceae</taxon>
        <taxon>Saccharomyces</taxon>
    </lineage>
</organism>
<sequence length="1176" mass="132967">MSGFSLSEYLTKFQTTDRESYPRLQDPSRELNVIIDQLAVSPEQIDASPDSLEALIDLCHDFPHLTPKLQTQLSYLISSSLSNLSKDIKANLSSNVNFTEIGGLIPQWKRHLEEYGYLIQVLLTFLQDELHKVSSQSTNLNRSAKNSKNDSANVELFKRDCNQMENLLESITKLLEINLSKIFQTTPEKDLFIGLFTRPLFVLLEIEPVTKVSSLKMFIQRILAMCVKNHGQSSSIQSSLMTNLTYFLHLSVFNAELLKLLNDEYNYPQLTEDILKEISTRVFNAKDTTGPKAISNFLIKLSELSPGIMLRQMNLVITLLNNSSITLRCSVVEACGNIVAELAQDPQTMEHYKQQIAVLIELLEERFQDSNPYVRTKAIQGCSKICDLSSKFNKSKAKFTSLAVRSLQDRSSLVRRNSVKLLSKLLLKHPFKAIHGSQLRLSEWEEYLKGSESQLNSTLKKVESQETLNDTIERSLIEEEVEQDEGQCRTELEGSFNKSAELSRIENEVENINATNTSVLMKLKLMIVYYKDAISFIKEIHKSIELISNLLFSKNRNEVLESMDFLVLADAFDIELSEFGIKKMLHLVWMKGTNDEGTSISVHLIECYKQLFLTAPDSCNMQEKAAHIAKNLINLSIGASIADLASLEQLLGMMYEQKLIDQHVINILWAIYNSASKASMQKEQNVNNRDSEKGFSKEQIHGSIIILGMLSLADNEIALKGLESLLNIGLGAVGLKDLTLCRYSCLALERMVPKRSTIITKAINQELEDVAVKKLYAIIINYTKDNEYYPMCEQALSALFTISSKPDILATDLIREKTMMTFGKPEEEDSILSLEQSSRVVSLSQLLFIVGQVAIKTLVYLEKCEAEFKKRKIEAETRNGKVKNQGADVTNTTQDNGGDKELEMIGGTNEDDFTDAIQFVKENELLFGEKSILGKFCPIVEEIVSNSSRFSDPMLQRTATLCLEKLMCLSSKYCEKSLPLLITVMEKSPDPTIRSNAVLGLGDMAVCFNNLVDENTDYLYRRLHDENLMVQRTCLMTVTFLILAGQVKVKGQLGEMAKCLDNPDQGISDMCRLFFTELASKDNAIYNGFIDIFSNLSSDDLLGKESFKKIIKFLLTFIDKERHQKQLNEKLVGRLRKCETQKQWDDIAFVLNNLPYKNEDVTALLEQGFKVVSAKE</sequence>
<keyword id="KW-0002">3D-structure</keyword>
<keyword id="KW-0131">Cell cycle</keyword>
<keyword id="KW-0132">Cell division</keyword>
<keyword id="KW-0158">Chromosome</keyword>
<keyword id="KW-0226">DNA condensation</keyword>
<keyword id="KW-0498">Mitosis</keyword>
<keyword id="KW-0539">Nucleus</keyword>
<keyword id="KW-0597">Phosphoprotein</keyword>
<keyword id="KW-1185">Reference proteome</keyword>
<keyword id="KW-0677">Repeat</keyword>
<reference key="1">
    <citation type="journal article" date="1997" name="Nature">
        <title>The nucleotide sequence of Saccharomyces cerevisiae chromosome XII.</title>
        <authorList>
            <person name="Johnston M."/>
            <person name="Hillier L.W."/>
            <person name="Riles L."/>
            <person name="Albermann K."/>
            <person name="Andre B."/>
            <person name="Ansorge W."/>
            <person name="Benes V."/>
            <person name="Brueckner M."/>
            <person name="Delius H."/>
            <person name="Dubois E."/>
            <person name="Duesterhoeft A."/>
            <person name="Entian K.-D."/>
            <person name="Floeth M."/>
            <person name="Goffeau A."/>
            <person name="Hebling U."/>
            <person name="Heumann K."/>
            <person name="Heuss-Neitzel D."/>
            <person name="Hilbert H."/>
            <person name="Hilger F."/>
            <person name="Kleine K."/>
            <person name="Koetter P."/>
            <person name="Louis E.J."/>
            <person name="Messenguy F."/>
            <person name="Mewes H.-W."/>
            <person name="Miosga T."/>
            <person name="Moestl D."/>
            <person name="Mueller-Auer S."/>
            <person name="Nentwich U."/>
            <person name="Obermaier B."/>
            <person name="Piravandi E."/>
            <person name="Pohl T.M."/>
            <person name="Portetelle D."/>
            <person name="Purnelle B."/>
            <person name="Rechmann S."/>
            <person name="Rieger M."/>
            <person name="Rinke M."/>
            <person name="Rose M."/>
            <person name="Scharfe M."/>
            <person name="Scherens B."/>
            <person name="Scholler P."/>
            <person name="Schwager C."/>
            <person name="Schwarz S."/>
            <person name="Underwood A.P."/>
            <person name="Urrestarazu L.A."/>
            <person name="Vandenbol M."/>
            <person name="Verhasselt P."/>
            <person name="Vierendeels F."/>
            <person name="Voet M."/>
            <person name="Volckaert G."/>
            <person name="Voss H."/>
            <person name="Wambutt R."/>
            <person name="Wedler E."/>
            <person name="Wedler H."/>
            <person name="Zimmermann F.K."/>
            <person name="Zollner A."/>
            <person name="Hani J."/>
            <person name="Hoheisel J.D."/>
        </authorList>
    </citation>
    <scope>NUCLEOTIDE SEQUENCE [LARGE SCALE GENOMIC DNA]</scope>
    <source>
        <strain>ATCC 204508 / S288c</strain>
    </source>
</reference>
<reference key="2">
    <citation type="journal article" date="2014" name="G3 (Bethesda)">
        <title>The reference genome sequence of Saccharomyces cerevisiae: Then and now.</title>
        <authorList>
            <person name="Engel S.R."/>
            <person name="Dietrich F.S."/>
            <person name="Fisk D.G."/>
            <person name="Binkley G."/>
            <person name="Balakrishnan R."/>
            <person name="Costanzo M.C."/>
            <person name="Dwight S.S."/>
            <person name="Hitz B.C."/>
            <person name="Karra K."/>
            <person name="Nash R.S."/>
            <person name="Weng S."/>
            <person name="Wong E.D."/>
            <person name="Lloyd P."/>
            <person name="Skrzypek M.S."/>
            <person name="Miyasato S.R."/>
            <person name="Simison M."/>
            <person name="Cherry J.M."/>
        </authorList>
    </citation>
    <scope>GENOME REANNOTATION</scope>
    <source>
        <strain>ATCC 204508 / S288c</strain>
    </source>
</reference>
<reference key="3">
    <citation type="journal article" date="2000" name="J. Cell Biol.">
        <title>The condensin complex governs chromosome condensation and mitotic transmission of rDNA.</title>
        <authorList>
            <person name="Freeman L."/>
            <person name="Aragon-Alcaide L."/>
            <person name="Strunnikov A.V."/>
        </authorList>
    </citation>
    <scope>IDENTIFICATION IN A CONDENSIN COMPLEX WITH SMC2; SMC4; BRN1 AND YCG1</scope>
</reference>
<reference key="4">
    <citation type="journal article" date="2002" name="Mol. Biol. Cell">
        <title>Mutation of YCS4, a budding yeast condensin subunit, affects mitotic and nonmitotic chromosome behavior.</title>
        <authorList>
            <person name="Bhalla N."/>
            <person name="Biggins S."/>
            <person name="Murray A.W."/>
        </authorList>
    </citation>
    <scope>FUNCTION</scope>
    <scope>SUBCELLULAR LOCATION</scope>
</reference>
<reference key="5">
    <citation type="journal article" date="2003" name="Nature">
        <title>Global analysis of protein expression in yeast.</title>
        <authorList>
            <person name="Ghaemmaghami S."/>
            <person name="Huh W.-K."/>
            <person name="Bower K."/>
            <person name="Howson R.W."/>
            <person name="Belle A."/>
            <person name="Dephoure N."/>
            <person name="O'Shea E.K."/>
            <person name="Weissman J.S."/>
        </authorList>
    </citation>
    <scope>LEVEL OF PROTEIN EXPRESSION [LARGE SCALE ANALYSIS]</scope>
</reference>
<reference key="6">
    <citation type="journal article" date="2008" name="Mol. Cell. Proteomics">
        <title>A multidimensional chromatography technology for in-depth phosphoproteome analysis.</title>
        <authorList>
            <person name="Albuquerque C.P."/>
            <person name="Smolka M.B."/>
            <person name="Payne S.H."/>
            <person name="Bafna V."/>
            <person name="Eng J."/>
            <person name="Zhou H."/>
        </authorList>
    </citation>
    <scope>PHOSPHORYLATION [LARGE SCALE ANALYSIS] AT SER-464</scope>
    <scope>IDENTIFICATION BY MASS SPECTROMETRY [LARGE SCALE ANALYSIS]</scope>
</reference>
<reference key="7">
    <citation type="journal article" date="2009" name="Science">
        <title>Global analysis of Cdk1 substrate phosphorylation sites provides insights into evolution.</title>
        <authorList>
            <person name="Holt L.J."/>
            <person name="Tuch B.B."/>
            <person name="Villen J."/>
            <person name="Johnson A.D."/>
            <person name="Gygi S.P."/>
            <person name="Morgan D.O."/>
        </authorList>
    </citation>
    <scope>PHOSPHORYLATION [LARGE SCALE ANALYSIS] AT SER-475</scope>
    <scope>IDENTIFICATION BY MASS SPECTROMETRY [LARGE SCALE ANALYSIS]</scope>
</reference>
<evidence type="ECO:0000269" key="1">
    <source>
    </source>
</evidence>
<evidence type="ECO:0000269" key="2">
    <source>
    </source>
</evidence>
<evidence type="ECO:0000269" key="3">
    <source>
    </source>
</evidence>
<evidence type="ECO:0000305" key="4"/>
<evidence type="ECO:0007744" key="5">
    <source>
    </source>
</evidence>
<evidence type="ECO:0007744" key="6">
    <source>
    </source>
</evidence>
<evidence type="ECO:0007829" key="7">
    <source>
        <dbReference type="PDB" id="7Q2X"/>
    </source>
</evidence>
<evidence type="ECO:0007829" key="8">
    <source>
        <dbReference type="PDB" id="7Q2Y"/>
    </source>
</evidence>
<evidence type="ECO:0007829" key="9">
    <source>
        <dbReference type="PDB" id="7QEN"/>
    </source>
</evidence>
<dbReference type="EMBL" id="U17244">
    <property type="protein sequence ID" value="AAB67384.1"/>
    <property type="molecule type" value="Genomic_DNA"/>
</dbReference>
<dbReference type="EMBL" id="U17245">
    <property type="protein sequence ID" value="AAB67369.1"/>
    <property type="molecule type" value="Genomic_DNA"/>
</dbReference>
<dbReference type="EMBL" id="BK006945">
    <property type="protein sequence ID" value="DAA09585.1"/>
    <property type="molecule type" value="Genomic_DNA"/>
</dbReference>
<dbReference type="PIR" id="S51408">
    <property type="entry name" value="S51408"/>
</dbReference>
<dbReference type="RefSeq" id="NP_013374.1">
    <property type="nucleotide sequence ID" value="NM_001182159.1"/>
</dbReference>
<dbReference type="PDB" id="6YVU">
    <property type="method" value="EM"/>
    <property type="resolution" value="7.50 A"/>
    <property type="chains" value="D=1-1176"/>
</dbReference>
<dbReference type="PDB" id="6YVV">
    <property type="method" value="EM"/>
    <property type="resolution" value="7.50 A"/>
    <property type="chains" value="D=1-1176"/>
</dbReference>
<dbReference type="PDB" id="7Q2X">
    <property type="method" value="EM"/>
    <property type="resolution" value="3.00 A"/>
    <property type="chains" value="D=1-1176"/>
</dbReference>
<dbReference type="PDB" id="7Q2Y">
    <property type="method" value="EM"/>
    <property type="chains" value="D=1-1176"/>
</dbReference>
<dbReference type="PDB" id="7QEN">
    <property type="method" value="EM"/>
    <property type="resolution" value="3.46 A"/>
    <property type="chains" value="D=1-1176"/>
</dbReference>
<dbReference type="PDBsum" id="6YVU"/>
<dbReference type="PDBsum" id="6YVV"/>
<dbReference type="PDBsum" id="7Q2X"/>
<dbReference type="PDBsum" id="7Q2Y"/>
<dbReference type="PDBsum" id="7QEN"/>
<dbReference type="EMDB" id="EMD-10951"/>
<dbReference type="EMDB" id="EMD-10952"/>
<dbReference type="EMDB" id="EMD-13783"/>
<dbReference type="EMDB" id="EMD-13784"/>
<dbReference type="EMDB" id="EMD-13934"/>
<dbReference type="SMR" id="Q06156"/>
<dbReference type="BioGRID" id="31539">
    <property type="interactions" value="244"/>
</dbReference>
<dbReference type="ComplexPortal" id="CPX-1869">
    <property type="entry name" value="Nuclear condensin complex"/>
</dbReference>
<dbReference type="FunCoup" id="Q06156">
    <property type="interactions" value="742"/>
</dbReference>
<dbReference type="IntAct" id="Q06156">
    <property type="interactions" value="10"/>
</dbReference>
<dbReference type="MINT" id="Q06156"/>
<dbReference type="STRING" id="4932.YLR272C"/>
<dbReference type="CarbonylDB" id="Q06156"/>
<dbReference type="iPTMnet" id="Q06156"/>
<dbReference type="PaxDb" id="4932-YLR272C"/>
<dbReference type="PeptideAtlas" id="Q06156"/>
<dbReference type="EnsemblFungi" id="YLR272C_mRNA">
    <property type="protein sequence ID" value="YLR272C"/>
    <property type="gene ID" value="YLR272C"/>
</dbReference>
<dbReference type="GeneID" id="850977"/>
<dbReference type="KEGG" id="sce:YLR272C"/>
<dbReference type="AGR" id="SGD:S000004262"/>
<dbReference type="SGD" id="S000004262">
    <property type="gene designation" value="YCS4"/>
</dbReference>
<dbReference type="VEuPathDB" id="FungiDB:YLR272C"/>
<dbReference type="eggNOG" id="KOG0414">
    <property type="taxonomic scope" value="Eukaryota"/>
</dbReference>
<dbReference type="GeneTree" id="ENSGT00940000153566"/>
<dbReference type="HOGENOM" id="CLU_001867_1_0_1"/>
<dbReference type="InParanoid" id="Q06156"/>
<dbReference type="OMA" id="CPLEKLW"/>
<dbReference type="OrthoDB" id="436262at2759"/>
<dbReference type="BioCyc" id="YEAST:G3O-32371-MONOMER"/>
<dbReference type="Reactome" id="R-SCE-2514853">
    <property type="pathway name" value="Condensation of Prometaphase Chromosomes"/>
</dbReference>
<dbReference type="BioGRID-ORCS" id="850977">
    <property type="hits" value="2 hits in 10 CRISPR screens"/>
</dbReference>
<dbReference type="PRO" id="PR:Q06156"/>
<dbReference type="Proteomes" id="UP000002311">
    <property type="component" value="Chromosome XII"/>
</dbReference>
<dbReference type="RNAct" id="Q06156">
    <property type="molecule type" value="protein"/>
</dbReference>
<dbReference type="GO" id="GO:0000779">
    <property type="term" value="C:condensed chromosome, centromeric region"/>
    <property type="evidence" value="ECO:0000318"/>
    <property type="project" value="GO_Central"/>
</dbReference>
<dbReference type="GO" id="GO:0000796">
    <property type="term" value="C:condensin complex"/>
    <property type="evidence" value="ECO:0000314"/>
    <property type="project" value="SGD"/>
</dbReference>
<dbReference type="GO" id="GO:0005730">
    <property type="term" value="C:nucleolus"/>
    <property type="evidence" value="ECO:0000314"/>
    <property type="project" value="SGD"/>
</dbReference>
<dbReference type="GO" id="GO:0042393">
    <property type="term" value="F:histone binding"/>
    <property type="evidence" value="ECO:0000318"/>
    <property type="project" value="GO_Central"/>
</dbReference>
<dbReference type="GO" id="GO:0051301">
    <property type="term" value="P:cell division"/>
    <property type="evidence" value="ECO:0007669"/>
    <property type="project" value="UniProtKB-KW"/>
</dbReference>
<dbReference type="GO" id="GO:0030261">
    <property type="term" value="P:chromosome condensation"/>
    <property type="evidence" value="ECO:0000303"/>
    <property type="project" value="ComplexPortal"/>
</dbReference>
<dbReference type="GO" id="GO:0043007">
    <property type="term" value="P:maintenance of rDNA"/>
    <property type="evidence" value="ECO:0000315"/>
    <property type="project" value="SGD"/>
</dbReference>
<dbReference type="GO" id="GO:0010032">
    <property type="term" value="P:meiotic chromosome condensation"/>
    <property type="evidence" value="ECO:0000315"/>
    <property type="project" value="SGD"/>
</dbReference>
<dbReference type="GO" id="GO:0051307">
    <property type="term" value="P:meiotic chromosome separation"/>
    <property type="evidence" value="ECO:0000315"/>
    <property type="project" value="SGD"/>
</dbReference>
<dbReference type="GO" id="GO:0007076">
    <property type="term" value="P:mitotic chromosome condensation"/>
    <property type="evidence" value="ECO:0000315"/>
    <property type="project" value="SGD"/>
</dbReference>
<dbReference type="GO" id="GO:0000070">
    <property type="term" value="P:mitotic sister chromatid segregation"/>
    <property type="evidence" value="ECO:0000315"/>
    <property type="project" value="SGD"/>
</dbReference>
<dbReference type="GO" id="GO:1903342">
    <property type="term" value="P:negative regulation of meiotic DNA double-strand break formation"/>
    <property type="evidence" value="ECO:0000315"/>
    <property type="project" value="SGD"/>
</dbReference>
<dbReference type="GO" id="GO:0044804">
    <property type="term" value="P:nucleophagy"/>
    <property type="evidence" value="ECO:0000315"/>
    <property type="project" value="SGD"/>
</dbReference>
<dbReference type="GO" id="GO:0070550">
    <property type="term" value="P:rDNA chromatin condensation"/>
    <property type="evidence" value="ECO:0000315"/>
    <property type="project" value="SGD"/>
</dbReference>
<dbReference type="GO" id="GO:0030466">
    <property type="term" value="P:silent mating-type cassette heterochromatin formation"/>
    <property type="evidence" value="ECO:0000315"/>
    <property type="project" value="SGD"/>
</dbReference>
<dbReference type="GO" id="GO:0007130">
    <property type="term" value="P:synaptonemal complex assembly"/>
    <property type="evidence" value="ECO:0000315"/>
    <property type="project" value="SGD"/>
</dbReference>
<dbReference type="GO" id="GO:0070058">
    <property type="term" value="P:tRNA gene clustering"/>
    <property type="evidence" value="ECO:0000315"/>
    <property type="project" value="SGD"/>
</dbReference>
<dbReference type="FunFam" id="1.25.10.10:FF:000272">
    <property type="entry name" value="Condensin complex subunit 1"/>
    <property type="match status" value="1"/>
</dbReference>
<dbReference type="FunFam" id="1.25.10.10:FF:000687">
    <property type="entry name" value="Condensin complex subunit 1"/>
    <property type="match status" value="1"/>
</dbReference>
<dbReference type="Gene3D" id="1.25.10.10">
    <property type="entry name" value="Leucine-rich Repeat Variant"/>
    <property type="match status" value="2"/>
</dbReference>
<dbReference type="InterPro" id="IPR011989">
    <property type="entry name" value="ARM-like"/>
</dbReference>
<dbReference type="InterPro" id="IPR016024">
    <property type="entry name" value="ARM-type_fold"/>
</dbReference>
<dbReference type="InterPro" id="IPR026971">
    <property type="entry name" value="CND1/NCAPD3"/>
</dbReference>
<dbReference type="InterPro" id="IPR032682">
    <property type="entry name" value="Cnd1_C"/>
</dbReference>
<dbReference type="InterPro" id="IPR007673">
    <property type="entry name" value="Condensin_cplx_su1"/>
</dbReference>
<dbReference type="InterPro" id="IPR024324">
    <property type="entry name" value="Condensin_cplx_su1_N"/>
</dbReference>
<dbReference type="PANTHER" id="PTHR14222">
    <property type="entry name" value="CONDENSIN"/>
    <property type="match status" value="1"/>
</dbReference>
<dbReference type="PANTHER" id="PTHR14222:SF2">
    <property type="entry name" value="CONDENSIN COMPLEX SUBUNIT 1"/>
    <property type="match status" value="1"/>
</dbReference>
<dbReference type="Pfam" id="PF12717">
    <property type="entry name" value="Cnd1"/>
    <property type="match status" value="2"/>
</dbReference>
<dbReference type="Pfam" id="PF12922">
    <property type="entry name" value="Cnd1_N"/>
    <property type="match status" value="1"/>
</dbReference>
<dbReference type="PIRSF" id="PIRSF017127">
    <property type="entry name" value="Condensin_D2"/>
    <property type="match status" value="1"/>
</dbReference>
<dbReference type="SUPFAM" id="SSF48371">
    <property type="entry name" value="ARM repeat"/>
    <property type="match status" value="1"/>
</dbReference>
<proteinExistence type="evidence at protein level"/>
<gene>
    <name type="primary">YCS4</name>
    <name type="synonym">LOC7</name>
    <name type="ordered locus">YLR272C</name>
    <name type="ORF">L8479.14</name>
</gene>
<accession>Q06156</accession>
<accession>D6VYR9</accession>
<comment type="function">
    <text evidence="2">Regulatory subunit of the condensin complex, a complex required for conversion of interphase chromatin into mitotic-like condense chromosomes. The condensin complex probably introduces positive supercoils into relaxed DNA in the presence of type I topoisomerases and converts nicked DNA into positive knotted forms in the presence of type II topoisomerases. The condensin complex probably also plays a role during interphase.</text>
</comment>
<comment type="subunit">
    <text evidence="1">Component of the condensin complex, which contains the SMC2 and SMC4 heterodimer, and three non SMC subunits that probably regulate the complex: BRN1, YCS4 and YCG1/YCS5.</text>
</comment>
<comment type="interaction">
    <interactant intactId="EBI-4785">
        <id>Q06156</id>
    </interactant>
    <interactant intactId="EBI-17412">
        <id>P38989</id>
        <label>SMC2</label>
    </interactant>
    <organismsDiffer>false</organismsDiffer>
    <experiments>2</experiments>
</comment>
<comment type="interaction">
    <interactant intactId="EBI-4785">
        <id>Q06156</id>
    </interactant>
    <interactant intactId="EBI-17430">
        <id>Q12267</id>
        <label>SMC4</label>
    </interactant>
    <organismsDiffer>false</organismsDiffer>
    <experiments>2</experiments>
</comment>
<comment type="subcellular location">
    <subcellularLocation>
        <location evidence="2">Nucleus</location>
    </subcellularLocation>
    <subcellularLocation>
        <location evidence="2">Chromosome</location>
    </subcellularLocation>
    <text>Nuclear throughout the cell cycle. During mitosis, most of the condensin complex is associated with the chromatin. At the onset of prophase, condensin associates with chromosome arms and to chromosome condensation. At anaphase, it is enriched at rDNA. Dissociation from chromosomes is observed in late telophase.</text>
</comment>
<comment type="miscellaneous">
    <text evidence="3">Present with 2540 molecules/cell in log phase SD medium.</text>
</comment>
<comment type="similarity">
    <text evidence="4">Belongs to the CND1 (condensin subunit 1) family.</text>
</comment>
<feature type="chain" id="PRO_0000095046" description="Condensin complex subunit 1">
    <location>
        <begin position="1"/>
        <end position="1176"/>
    </location>
</feature>
<feature type="modified residue" description="Phosphoserine" evidence="5">
    <location>
        <position position="464"/>
    </location>
</feature>
<feature type="modified residue" description="Phosphoserine" evidence="6">
    <location>
        <position position="475"/>
    </location>
</feature>
<feature type="helix" evidence="7">
    <location>
        <begin position="6"/>
        <end position="14"/>
    </location>
</feature>
<feature type="helix" evidence="7">
    <location>
        <begin position="27"/>
        <end position="40"/>
    </location>
</feature>
<feature type="helix" evidence="7">
    <location>
        <begin position="42"/>
        <end position="44"/>
    </location>
</feature>
<feature type="helix" evidence="7">
    <location>
        <begin position="51"/>
        <end position="60"/>
    </location>
</feature>
<feature type="helix" evidence="7">
    <location>
        <begin position="62"/>
        <end position="64"/>
    </location>
</feature>
<feature type="helix" evidence="7">
    <location>
        <begin position="67"/>
        <end position="91"/>
    </location>
</feature>
<feature type="helix" evidence="7">
    <location>
        <begin position="105"/>
        <end position="127"/>
    </location>
</feature>
<feature type="turn" evidence="7">
    <location>
        <begin position="128"/>
        <end position="134"/>
    </location>
</feature>
<feature type="strand" evidence="9">
    <location>
        <begin position="141"/>
        <end position="143"/>
    </location>
</feature>
<feature type="helix" evidence="7">
    <location>
        <begin position="154"/>
        <end position="176"/>
    </location>
</feature>
<feature type="turn" evidence="7">
    <location>
        <begin position="180"/>
        <end position="182"/>
    </location>
</feature>
<feature type="helix" evidence="7">
    <location>
        <begin position="186"/>
        <end position="203"/>
    </location>
</feature>
<feature type="helix" evidence="7">
    <location>
        <begin position="207"/>
        <end position="211"/>
    </location>
</feature>
<feature type="helix" evidence="7">
    <location>
        <begin position="213"/>
        <end position="229"/>
    </location>
</feature>
<feature type="helix" evidence="7">
    <location>
        <begin position="235"/>
        <end position="246"/>
    </location>
</feature>
<feature type="strand" evidence="8">
    <location>
        <begin position="248"/>
        <end position="250"/>
    </location>
</feature>
<feature type="helix" evidence="7">
    <location>
        <begin position="251"/>
        <end position="263"/>
    </location>
</feature>
<feature type="helix" evidence="7">
    <location>
        <begin position="269"/>
        <end position="280"/>
    </location>
</feature>
<feature type="turn" evidence="8">
    <location>
        <begin position="285"/>
        <end position="287"/>
    </location>
</feature>
<feature type="helix" evidence="7">
    <location>
        <begin position="289"/>
        <end position="304"/>
    </location>
</feature>
<feature type="helix" evidence="7">
    <location>
        <begin position="306"/>
        <end position="310"/>
    </location>
</feature>
<feature type="helix" evidence="7">
    <location>
        <begin position="313"/>
        <end position="317"/>
    </location>
</feature>
<feature type="helix" evidence="7">
    <location>
        <begin position="318"/>
        <end position="321"/>
    </location>
</feature>
<feature type="helix" evidence="7">
    <location>
        <begin position="325"/>
        <end position="341"/>
    </location>
</feature>
<feature type="helix" evidence="7">
    <location>
        <begin position="342"/>
        <end position="344"/>
    </location>
</feature>
<feature type="helix" evidence="7">
    <location>
        <begin position="346"/>
        <end position="351"/>
    </location>
</feature>
<feature type="helix" evidence="7">
    <location>
        <begin position="353"/>
        <end position="365"/>
    </location>
</feature>
<feature type="helix" evidence="9">
    <location>
        <begin position="366"/>
        <end position="368"/>
    </location>
</feature>
<feature type="strand" evidence="9">
    <location>
        <begin position="369"/>
        <end position="371"/>
    </location>
</feature>
<feature type="helix" evidence="7">
    <location>
        <begin position="372"/>
        <end position="386"/>
    </location>
</feature>
<feature type="helix" evidence="7">
    <location>
        <begin position="394"/>
        <end position="406"/>
    </location>
</feature>
<feature type="helix" evidence="7">
    <location>
        <begin position="412"/>
        <end position="427"/>
    </location>
</feature>
<feature type="turn" evidence="7">
    <location>
        <begin position="431"/>
        <end position="437"/>
    </location>
</feature>
<feature type="helix" evidence="7">
    <location>
        <begin position="441"/>
        <end position="456"/>
    </location>
</feature>
<feature type="helix" evidence="7">
    <location>
        <begin position="518"/>
        <end position="550"/>
    </location>
</feature>
<feature type="helix" evidence="7">
    <location>
        <begin position="556"/>
        <end position="571"/>
    </location>
</feature>
<feature type="helix" evidence="7">
    <location>
        <begin position="577"/>
        <end position="585"/>
    </location>
</feature>
<feature type="turn" evidence="7">
    <location>
        <begin position="586"/>
        <end position="589"/>
    </location>
</feature>
<feature type="helix" evidence="7">
    <location>
        <begin position="600"/>
        <end position="611"/>
    </location>
</feature>
<feature type="helix" evidence="7">
    <location>
        <begin position="621"/>
        <end position="637"/>
    </location>
</feature>
<feature type="helix" evidence="7">
    <location>
        <begin position="641"/>
        <end position="656"/>
    </location>
</feature>
<feature type="helix" evidence="7">
    <location>
        <begin position="663"/>
        <end position="673"/>
    </location>
</feature>
<feature type="helix" evidence="7">
    <location>
        <begin position="699"/>
        <end position="713"/>
    </location>
</feature>
<feature type="helix" evidence="7">
    <location>
        <begin position="715"/>
        <end position="719"/>
    </location>
</feature>
<feature type="helix" evidence="7">
    <location>
        <begin position="722"/>
        <end position="728"/>
    </location>
</feature>
<feature type="helix" evidence="7">
    <location>
        <begin position="732"/>
        <end position="736"/>
    </location>
</feature>
<feature type="helix" evidence="7">
    <location>
        <begin position="738"/>
        <end position="749"/>
    </location>
</feature>
<feature type="helix" evidence="7">
    <location>
        <begin position="765"/>
        <end position="780"/>
    </location>
</feature>
<feature type="helix" evidence="7">
    <location>
        <begin position="788"/>
        <end position="802"/>
    </location>
</feature>
<feature type="helix" evidence="7">
    <location>
        <begin position="806"/>
        <end position="820"/>
    </location>
</feature>
<feature type="helix" evidence="7">
    <location>
        <begin position="839"/>
        <end position="874"/>
    </location>
</feature>
<feature type="helix" evidence="7">
    <location>
        <begin position="909"/>
        <end position="922"/>
    </location>
</feature>
<feature type="turn" evidence="7">
    <location>
        <begin position="923"/>
        <end position="926"/>
    </location>
</feature>
<feature type="strand" evidence="7">
    <location>
        <begin position="927"/>
        <end position="930"/>
    </location>
</feature>
<feature type="helix" evidence="7">
    <location>
        <begin position="933"/>
        <end position="945"/>
    </location>
</feature>
<feature type="helix" evidence="7">
    <location>
        <begin position="947"/>
        <end position="950"/>
    </location>
</feature>
<feature type="helix" evidence="7">
    <location>
        <begin position="953"/>
        <end position="967"/>
    </location>
</feature>
<feature type="helix" evidence="7">
    <location>
        <begin position="971"/>
        <end position="986"/>
    </location>
</feature>
<feature type="helix" evidence="7">
    <location>
        <begin position="991"/>
        <end position="1006"/>
    </location>
</feature>
<feature type="helix" evidence="7">
    <location>
        <begin position="1009"/>
        <end position="1012"/>
    </location>
</feature>
<feature type="turn" evidence="7">
    <location>
        <begin position="1013"/>
        <end position="1016"/>
    </location>
</feature>
<feature type="helix" evidence="7">
    <location>
        <begin position="1017"/>
        <end position="1022"/>
    </location>
</feature>
<feature type="helix" evidence="7">
    <location>
        <begin position="1028"/>
        <end position="1043"/>
    </location>
</feature>
<feature type="helix" evidence="7">
    <location>
        <begin position="1053"/>
        <end position="1058"/>
    </location>
</feature>
<feature type="helix" evidence="7">
    <location>
        <begin position="1059"/>
        <end position="1061"/>
    </location>
</feature>
<feature type="helix" evidence="7">
    <location>
        <begin position="1065"/>
        <end position="1077"/>
    </location>
</feature>
<feature type="turn" evidence="7">
    <location>
        <begin position="1078"/>
        <end position="1080"/>
    </location>
</feature>
<feature type="helix" evidence="7">
    <location>
        <begin position="1081"/>
        <end position="1083"/>
    </location>
</feature>
<feature type="helix" evidence="7">
    <location>
        <begin position="1084"/>
        <end position="1099"/>
    </location>
</feature>
<feature type="strand" evidence="9">
    <location>
        <begin position="1100"/>
        <end position="1102"/>
    </location>
</feature>
<feature type="helix" evidence="7">
    <location>
        <begin position="1104"/>
        <end position="1115"/>
    </location>
</feature>
<feature type="helix" evidence="7">
    <location>
        <begin position="1123"/>
        <end position="1135"/>
    </location>
</feature>
<feature type="helix" evidence="7">
    <location>
        <begin position="1141"/>
        <end position="1146"/>
    </location>
</feature>
<feature type="helix" evidence="7">
    <location>
        <begin position="1149"/>
        <end position="1153"/>
    </location>
</feature>
<feature type="helix" evidence="7">
    <location>
        <begin position="1159"/>
        <end position="1167"/>
    </location>
</feature>
<protein>
    <recommendedName>
        <fullName>Condensin complex subunit 1</fullName>
    </recommendedName>
    <alternativeName>
        <fullName>XCAP-D2 homolog</fullName>
    </alternativeName>
</protein>